<sequence>MQNRRKAFYKLCPNAMPDLSNRLSKKQSKTEKKLHKNIFAHTGPVTIYVDPPSSAVDSALATIDWQDLVDCNSVIQQDAAGGAITQQQDHCLSGEPDFDLQEFRDAVDQFIADQPSLMQPSLGPPEFQLPACNVPVFEPCMTNPLQAQPEHLLPINVQTIPSTEQYWRDVADHNQKALGDALVENNQLQVSLTEKQEEIVSLKEKNIQLNELANQAKHLSSVLDKLMKERTKQNSGATQGRLPVKRSLEDFYPQSNEPDSTQVDEILREISKKCNIALMGSDLSERKRPRLEPMDSMDWQEEGVTEIKMCGAFHGLKTSTGLNSVNLGDTDLEDVSFRTSIKEHSTIRTLAFPQGNAFTIRTSGGGYKFRWVPN</sequence>
<comment type="function">
    <text evidence="3 4">Transcription regulator specifically required for multiciliate cell differentiation. Acts in a multiprotein complex containing E2F4 and E2F5 that binds and activates genes required for centriole biogenesis. Activates genes required for centriole assembly (plk4, cep152) and genes specifically required for motile cilia formation (foxj1). Also promotes the deuterosome pathway of centriole biogenesis by activating expression of ccdc67/deup1, but not its paralog cep63.</text>
</comment>
<comment type="subunit">
    <text evidence="4">Component of the EDM complex, at least composed of e2f4, e2f5, mcidas and tfdp1.</text>
</comment>
<comment type="subcellular location">
    <subcellularLocation>
        <location evidence="3">Nucleus</location>
    </subcellularLocation>
</comment>
<comment type="tissue specificity">
    <text evidence="3">Expressed in multiciliate differentiating cells. Expression is lost by stage 26, when multiciliate cells in the skin are fully differentiated, but is then detected in the developing nephrostomes of the kidneys where multiciliate cells form at later stages.</text>
</comment>
<comment type="induction">
    <text>Down-regulated by Notch signaling.</text>
</comment>
<comment type="domain">
    <text evidence="4">The TIRT domain mediates interaction with e2f4 and tfdp1.</text>
</comment>
<comment type="similarity">
    <text evidence="8">Belongs to the geminin family.</text>
</comment>
<comment type="sequence caution" evidence="8">
    <conflict type="erroneous initiation">
        <sequence resource="EMBL-CDS" id="AAI24893"/>
    </conflict>
    <text>Truncated N-terminus.</text>
</comment>
<name>MCIN_XENLA</name>
<evidence type="ECO:0000250" key="1">
    <source>
        <dbReference type="UniProtKB" id="D6RGH6"/>
    </source>
</evidence>
<evidence type="ECO:0000256" key="2">
    <source>
        <dbReference type="SAM" id="MobiDB-lite"/>
    </source>
</evidence>
<evidence type="ECO:0000269" key="3">
    <source>
    </source>
</evidence>
<evidence type="ECO:0000269" key="4">
    <source>
    </source>
</evidence>
<evidence type="ECO:0000269" key="5">
    <source>
    </source>
</evidence>
<evidence type="ECO:0000303" key="6">
    <source>
    </source>
</evidence>
<evidence type="ECO:0000303" key="7">
    <source>
    </source>
</evidence>
<evidence type="ECO:0000305" key="8"/>
<organism>
    <name type="scientific">Xenopus laevis</name>
    <name type="common">African clawed frog</name>
    <dbReference type="NCBI Taxonomy" id="8355"/>
    <lineage>
        <taxon>Eukaryota</taxon>
        <taxon>Metazoa</taxon>
        <taxon>Chordata</taxon>
        <taxon>Craniata</taxon>
        <taxon>Vertebrata</taxon>
        <taxon>Euteleostomi</taxon>
        <taxon>Amphibia</taxon>
        <taxon>Batrachia</taxon>
        <taxon>Anura</taxon>
        <taxon>Pipoidea</taxon>
        <taxon>Pipidae</taxon>
        <taxon>Xenopodinae</taxon>
        <taxon>Xenopus</taxon>
        <taxon>Xenopus</taxon>
    </lineage>
</organism>
<dbReference type="EMBL" id="BC124892">
    <property type="protein sequence ID" value="AAI24893.1"/>
    <property type="status" value="ALT_INIT"/>
    <property type="molecule type" value="mRNA"/>
</dbReference>
<dbReference type="RefSeq" id="NP_001121276.1">
    <property type="nucleotide sequence ID" value="NM_001127804.1"/>
</dbReference>
<dbReference type="SMR" id="Q08B36"/>
<dbReference type="DNASU" id="100158359"/>
<dbReference type="GeneID" id="100158359"/>
<dbReference type="KEGG" id="xla:100158359"/>
<dbReference type="AGR" id="Xenbase:XB-GENE-22041450"/>
<dbReference type="CTD" id="100158359"/>
<dbReference type="Xenbase" id="XB-GENE-22041450">
    <property type="gene designation" value="mcidas.S"/>
</dbReference>
<dbReference type="OrthoDB" id="9445365at2759"/>
<dbReference type="Proteomes" id="UP000186698">
    <property type="component" value="Chromosome 1S"/>
</dbReference>
<dbReference type="Bgee" id="100158359">
    <property type="expression patterns" value="Expressed in egg cell and 7 other cell types or tissues"/>
</dbReference>
<dbReference type="GO" id="GO:0005634">
    <property type="term" value="C:nucleus"/>
    <property type="evidence" value="ECO:0000314"/>
    <property type="project" value="UniProtKB"/>
</dbReference>
<dbReference type="GO" id="GO:0003713">
    <property type="term" value="F:transcription coactivator activity"/>
    <property type="evidence" value="ECO:0000314"/>
    <property type="project" value="UniProtKB"/>
</dbReference>
<dbReference type="GO" id="GO:0098534">
    <property type="term" value="P:centriole assembly"/>
    <property type="evidence" value="ECO:0000314"/>
    <property type="project" value="UniProtKB"/>
</dbReference>
<dbReference type="GO" id="GO:0060271">
    <property type="term" value="P:cilium assembly"/>
    <property type="evidence" value="ECO:0000315"/>
    <property type="project" value="UniProtKB"/>
</dbReference>
<dbReference type="GO" id="GO:0044458">
    <property type="term" value="P:motile cilium assembly"/>
    <property type="evidence" value="ECO:0000314"/>
    <property type="project" value="UniProtKB"/>
</dbReference>
<dbReference type="GO" id="GO:1903251">
    <property type="term" value="P:multi-ciliated epithelial cell differentiation"/>
    <property type="evidence" value="ECO:0000314"/>
    <property type="project" value="UniProtKB"/>
</dbReference>
<dbReference type="GO" id="GO:0045786">
    <property type="term" value="P:negative regulation of cell cycle"/>
    <property type="evidence" value="ECO:0000318"/>
    <property type="project" value="GO_Central"/>
</dbReference>
<dbReference type="GO" id="GO:0008156">
    <property type="term" value="P:negative regulation of DNA replication"/>
    <property type="evidence" value="ECO:0007669"/>
    <property type="project" value="TreeGrafter"/>
</dbReference>
<dbReference type="GO" id="GO:0045944">
    <property type="term" value="P:positive regulation of transcription by RNA polymerase II"/>
    <property type="evidence" value="ECO:0000314"/>
    <property type="project" value="UniProtKB"/>
</dbReference>
<dbReference type="GO" id="GO:1902017">
    <property type="term" value="P:regulation of cilium assembly"/>
    <property type="evidence" value="ECO:0000250"/>
    <property type="project" value="UniProtKB"/>
</dbReference>
<dbReference type="GO" id="GO:0030174">
    <property type="term" value="P:regulation of DNA-templated DNA replication initiation"/>
    <property type="evidence" value="ECO:0000318"/>
    <property type="project" value="GO_Central"/>
</dbReference>
<dbReference type="GO" id="GO:0007346">
    <property type="term" value="P:regulation of mitotic cell cycle"/>
    <property type="evidence" value="ECO:0000250"/>
    <property type="project" value="UniProtKB"/>
</dbReference>
<dbReference type="GO" id="GO:2001141">
    <property type="term" value="P:regulation of RNA biosynthetic process"/>
    <property type="evidence" value="ECO:0000304"/>
    <property type="project" value="UniProtKB"/>
</dbReference>
<dbReference type="CDD" id="cd22590">
    <property type="entry name" value="McIdas_CC"/>
    <property type="match status" value="1"/>
</dbReference>
<dbReference type="Gene3D" id="1.20.5.1180">
    <property type="entry name" value="Geminin coiled-coil domain"/>
    <property type="match status" value="1"/>
</dbReference>
<dbReference type="InterPro" id="IPR022786">
    <property type="entry name" value="Geminin/Multicilin"/>
</dbReference>
<dbReference type="PANTHER" id="PTHR13372">
    <property type="entry name" value="GEMININ"/>
    <property type="match status" value="1"/>
</dbReference>
<dbReference type="PANTHER" id="PTHR13372:SF3">
    <property type="entry name" value="MULTICILIN"/>
    <property type="match status" value="1"/>
</dbReference>
<dbReference type="Pfam" id="PF07412">
    <property type="entry name" value="Geminin"/>
    <property type="match status" value="1"/>
</dbReference>
<dbReference type="SUPFAM" id="SSF111469">
    <property type="entry name" value="Geminin coiled-coil domain"/>
    <property type="match status" value="1"/>
</dbReference>
<keyword id="KW-0010">Activator</keyword>
<keyword id="KW-0131">Cell cycle</keyword>
<keyword id="KW-0970">Cilium biogenesis/degradation</keyword>
<keyword id="KW-0175">Coiled coil</keyword>
<keyword id="KW-0539">Nucleus</keyword>
<keyword id="KW-1185">Reference proteome</keyword>
<keyword id="KW-0804">Transcription</keyword>
<keyword id="KW-0805">Transcription regulation</keyword>
<proteinExistence type="evidence at protein level"/>
<gene>
    <name type="primary">mcidas</name>
    <name type="synonym">idas</name>
    <name evidence="6" type="synonym">mci</name>
    <name evidence="6" type="synonym">mcin</name>
</gene>
<protein>
    <recommendedName>
        <fullName evidence="6">Multicilin</fullName>
    </recommendedName>
    <alternativeName>
        <fullName evidence="6">Multiciliate differentiation and DNA synthesis-associated cell cycle protein</fullName>
        <shortName>McIdas protein</shortName>
    </alternativeName>
    <alternativeName>
        <fullName>Protein Idas</fullName>
    </alternativeName>
</protein>
<feature type="chain" id="PRO_0000411079" description="Multicilin">
    <location>
        <begin position="1"/>
        <end position="374"/>
    </location>
</feature>
<feature type="region of interest" description="Disordered" evidence="2">
    <location>
        <begin position="230"/>
        <end position="260"/>
    </location>
</feature>
<feature type="region of interest" description="TIRT domain" evidence="7">
    <location>
        <begin position="330"/>
        <end position="374"/>
    </location>
</feature>
<feature type="coiled-coil region" evidence="1">
    <location>
        <begin position="164"/>
        <end position="212"/>
    </location>
</feature>
<feature type="mutagenesis site" description="Loss of function due to disruption of the EDM complex." evidence="5">
    <original>G</original>
    <variation>D</variation>
    <location>
        <position position="355"/>
    </location>
</feature>
<feature type="mutagenesis site" description="Loss of function due to disruption of the EDM complex." evidence="5">
    <original>R</original>
    <variation>H</variation>
    <location>
        <position position="370"/>
    </location>
</feature>
<accession>Q08B36</accession>
<reference key="1">
    <citation type="submission" date="2006-10" db="EMBL/GenBank/DDBJ databases">
        <authorList>
            <consortium name="NIH - Xenopus Gene Collection (XGC) project"/>
        </authorList>
    </citation>
    <scope>NUCLEOTIDE SEQUENCE [LARGE SCALE MRNA]</scope>
    <source>
        <tissue>Embryo</tissue>
    </source>
</reference>
<reference key="2">
    <citation type="journal article" date="2012" name="Nat. Cell Biol.">
        <title>Multicilin promotes centriole assembly and ciliogenesis during multiciliate cell differentiation.</title>
        <authorList>
            <person name="Stubbs J.L."/>
            <person name="Vladar E.K."/>
            <person name="Axelrod J.D."/>
            <person name="Kintner C."/>
        </authorList>
    </citation>
    <scope>FUNCTION</scope>
    <scope>SUBCELLULAR LOCATION</scope>
    <scope>TISSUE SPECIFICITY</scope>
</reference>
<reference key="3">
    <citation type="journal article" date="2014" name="Genes Dev.">
        <title>Multicilin drives centriole biogenesis via E2f proteins.</title>
        <authorList>
            <person name="Ma L."/>
            <person name="Quigley I."/>
            <person name="Omran H."/>
            <person name="Kintner C."/>
        </authorList>
    </citation>
    <scope>FUNCTION</scope>
    <scope>IDENTIFICATION IN THE EDM COMPLEX</scope>
    <scope>MUTAGENESIS OF GLY-355 AND ARG-370</scope>
</reference>
<reference key="4">
    <citation type="journal article" date="2014" name="Nat. Commun.">
        <title>MCIDAS mutations result in a mucociliary clearance disorder with reduced generation of multiple motile cilia.</title>
        <authorList>
            <person name="Boon M."/>
            <person name="Wallmeier J."/>
            <person name="Ma L."/>
            <person name="Loges N.T."/>
            <person name="Jaspers M."/>
            <person name="Olbrich H."/>
            <person name="Dougherty G.W."/>
            <person name="Raidt J."/>
            <person name="Werner C."/>
            <person name="Amirav I."/>
            <person name="Hevroni A."/>
            <person name="Abitbul R."/>
            <person name="Avital A."/>
            <person name="Soferman R."/>
            <person name="Wessels M."/>
            <person name="O'Callaghan C."/>
            <person name="Chung E.M."/>
            <person name="Rutman A."/>
            <person name="Hirst R.A."/>
            <person name="Moya E."/>
            <person name="Mitchison H.M."/>
            <person name="Van Daele S."/>
            <person name="De Boeck K."/>
            <person name="Jorissen M."/>
            <person name="Kintner C."/>
            <person name="Cuppens H."/>
            <person name="Omran H."/>
        </authorList>
    </citation>
    <scope>MUTAGENESIS OF GLY-355 AND ARG-370</scope>
</reference>